<keyword id="KW-0349">Heme</keyword>
<keyword id="KW-0376">Hydrogen peroxide</keyword>
<keyword id="KW-0408">Iron</keyword>
<keyword id="KW-0479">Metal-binding</keyword>
<keyword id="KW-0556">Organic radical</keyword>
<keyword id="KW-0560">Oxidoreductase</keyword>
<keyword id="KW-0575">Peroxidase</keyword>
<keyword id="KW-0843">Virulence</keyword>
<protein>
    <recommendedName>
        <fullName evidence="2">Catalase-peroxidase</fullName>
        <shortName evidence="2">CP</shortName>
        <ecNumber evidence="2">1.11.1.21</ecNumber>
    </recommendedName>
    <alternativeName>
        <fullName evidence="2">Peroxidase/catalase</fullName>
    </alternativeName>
</protein>
<comment type="function">
    <text evidence="1 2 3">Bifunctional enzyme with both catalase and broad-spectrum peroxidase activity, oxidizing various electron donors including NADP(H) (By similarity). Protects M.tuberculosis against toxic reactive oxygen species (ROS) including hydrogen peroxide as well as organic peroxides and thus contributes to its survival within host macrophages by countering the phagocyte oxidative burst (PubMed:15165233). Also displays efficient peroxynitritase activity, which may help the bacterium to persist in macrophages (By similarity).</text>
</comment>
<comment type="function">
    <text evidence="1">Catalyzes the oxidative activation of the antitubercular pro-drug isoniazid (INH) to generate an isonicotinoyl radical that then reacts nonenzymatically with NAD to form an isonicotinoyl-NAD adduct which inhibits InhA.</text>
</comment>
<comment type="catalytic activity">
    <reaction evidence="2">
        <text>2 H2O2 = O2 + 2 H2O</text>
        <dbReference type="Rhea" id="RHEA:20309"/>
        <dbReference type="ChEBI" id="CHEBI:15377"/>
        <dbReference type="ChEBI" id="CHEBI:15379"/>
        <dbReference type="ChEBI" id="CHEBI:16240"/>
        <dbReference type="EC" id="1.11.1.21"/>
    </reaction>
</comment>
<comment type="catalytic activity">
    <reaction evidence="2">
        <text>H2O2 + AH2 = A + 2 H2O</text>
        <dbReference type="Rhea" id="RHEA:30275"/>
        <dbReference type="ChEBI" id="CHEBI:13193"/>
        <dbReference type="ChEBI" id="CHEBI:15377"/>
        <dbReference type="ChEBI" id="CHEBI:16240"/>
        <dbReference type="ChEBI" id="CHEBI:17499"/>
        <dbReference type="EC" id="1.11.1.21"/>
    </reaction>
</comment>
<comment type="cofactor">
    <cofactor evidence="2">
        <name>heme b</name>
        <dbReference type="ChEBI" id="CHEBI:60344"/>
    </cofactor>
    <text evidence="2">Binds 1 heme b (iron(II)-protoporphyrin IX) group per dimer.</text>
</comment>
<comment type="subunit">
    <text evidence="1">Homodimer.</text>
</comment>
<comment type="induction">
    <text evidence="4">By the metal chelator phenanthroline via Rip1, RskA/SigK and RslA/SigL.</text>
</comment>
<comment type="PTM">
    <text evidence="2">Formation of the three residue Trp-Tyr-Met cross-link is important for the catalase, but not the peroxidase activity of the enzyme.</text>
</comment>
<comment type="disruption phenotype">
    <text evidence="3">Cells lacking this gene are devoid of catalase activity, supersensitive to H(2)O(2) exposure and highly resistant to the antitubercular drug isoniazid (INH) in vitro. This mutant strain is markedly attenuated for virulence in mice and displays impaired growth in infected macrophages, but its growth and survival is indistinguishable from wild-type in macrophages lacking the ROS-generating NADPH oxidase (Phox).</text>
</comment>
<comment type="similarity">
    <text evidence="2">Belongs to the peroxidase family. Peroxidase/catalase subfamily.</text>
</comment>
<proteinExistence type="evidence at protein level"/>
<sequence length="740" mass="80605">MPEQHPPITETTTGAASNGCPVVGHMKYPVEGGGNQDWWPNRLNLKVLHQNPAVADPMGAAFDYAAEVATIDVDALTRDIEEVMTTSQPWWPADYGHYGPLFIRMAWHAAGTYRIHDGRGGAGGGMQRFAPLNSWPDNASLDKARRLLWPVKKKYGKKLSWADLIVFAGNCALESMGFKTFGFGFGRVDQWEPDEVYWGKEATWLGDERYSGKRDLENPLAAVQMGLIYVNPEGPNGNPDPMAAAVDIRETFRRMAMNDVETAALIVGGHTFGKTHGAGPADLVGPEPEAAPLEQMGLGWKSSYGTGTGKDAITSGIEVVWTNTPTKWDNSFLEILYGYEWELTKSPAGAWQYTAKDGAGAGTIPDPFGGPGRSPTMLATDLSLRVDPIYERITRRWLEHPEELADEFAKAWYKLIHRDMGPVARYLGPLVPKQTLLWQDPVPAVSHDLVGEAEIASLKSQIRASGLTVSQLVSTAWAAASSFRGSDKRGGANGGRIRLQPQVGWEVNDPDGDLRKVIRTLEEIQESFNSAAPGNIKVSFADLVVLGGCAAIEKAAKAAGHNITVPFTPGRTDASQEQTDVESFAVLEPKADGFRNYLGKGNPLPAEYMLLDKANLLTLSAPEMTVLVGGLRVLGANYKRLPLGVFTEASESLTNDFFVNLLDMGITWEPSPADDGTYQGKDGSGKVKWTGSRVDLVFGSNSELRALVEVYGADDAQPKFVQDFVAAWDKVMNLDRFDVR</sequence>
<reference key="1">
    <citation type="journal article" date="2012" name="J. Bacteriol.">
        <title>Complete annotated genome sequence of Mycobacterium tuberculosis Erdman.</title>
        <authorList>
            <person name="Miyoshi-Akiyama T."/>
            <person name="Matsumura K."/>
            <person name="Iwai H."/>
            <person name="Funatogawa K."/>
            <person name="Kirikae T."/>
        </authorList>
    </citation>
    <scope>NUCLEOTIDE SEQUENCE [LARGE SCALE GENOMIC DNA]</scope>
    <source>
        <strain>ATCC 35801 / TMC 107 / Erdman</strain>
    </source>
</reference>
<reference key="2">
    <citation type="journal article" date="2004" name="Mol. Microbiol.">
        <title>Role of KatG catalase-peroxidase in mycobacterial pathogenesis: countering the phagocyte oxidative burst.</title>
        <authorList>
            <person name="Ng V.H."/>
            <person name="Cox J.S."/>
            <person name="Sousa A.O."/>
            <person name="MacMicking J.D."/>
            <person name="McKinney J.D."/>
        </authorList>
    </citation>
    <scope>FUNCTION IN PATHOGENESIS</scope>
    <scope>DISRUPTION PHENOTYPE</scope>
    <source>
        <strain>ATCC 35801 / TMC 107 / Erdman</strain>
    </source>
</reference>
<reference key="3">
    <citation type="journal article" date="2010" name="Mol. Microbiol.">
        <title>M. tuberculosis intramembrane protease Rip1 controls transcription through three anti-sigma factor substrates.</title>
        <authorList>
            <person name="Sklar J.G."/>
            <person name="Makinoshima H."/>
            <person name="Schneider J.S."/>
            <person name="Glickman M.S."/>
        </authorList>
    </citation>
    <scope>INDUCTION</scope>
    <source>
        <strain>ATCC 35801 / TMC 107 / Erdman</strain>
    </source>
</reference>
<feature type="chain" id="PRO_0000422688" description="Catalase-peroxidase">
    <location>
        <begin position="1"/>
        <end position="740"/>
    </location>
</feature>
<feature type="active site" description="Proton acceptor" evidence="2">
    <location>
        <position position="108"/>
    </location>
</feature>
<feature type="active site" description="Tryptophan radical intermediate" evidence="1">
    <location>
        <position position="321"/>
    </location>
</feature>
<feature type="binding site" description="axial binding residue" evidence="2">
    <location>
        <position position="270"/>
    </location>
    <ligand>
        <name>heme b</name>
        <dbReference type="ChEBI" id="CHEBI:60344"/>
    </ligand>
    <ligandPart>
        <name>Fe</name>
        <dbReference type="ChEBI" id="CHEBI:18248"/>
    </ligandPart>
</feature>
<feature type="site" description="Transition state stabilizer" evidence="2">
    <location>
        <position position="104"/>
    </location>
</feature>
<feature type="cross-link" description="Tryptophyl-tyrosyl-methioninium (Trp-Tyr) (with M-255)" evidence="2">
    <location>
        <begin position="107"/>
        <end position="229"/>
    </location>
</feature>
<feature type="cross-link" description="Tryptophyl-tyrosyl-methioninium (Tyr-Met) (with W-107)" evidence="2">
    <location>
        <begin position="229"/>
        <end position="255"/>
    </location>
</feature>
<accession>H8F3Q9</accession>
<dbReference type="EC" id="1.11.1.21" evidence="2"/>
<dbReference type="EMBL" id="AP012340">
    <property type="protein sequence ID" value="BAL65894.1"/>
    <property type="molecule type" value="Genomic_DNA"/>
</dbReference>
<dbReference type="RefSeq" id="WP_003899075.1">
    <property type="nucleotide sequence ID" value="NZ_KK339487.1"/>
</dbReference>
<dbReference type="SMR" id="H8F3Q9"/>
<dbReference type="KEGG" id="mtn:ERDMAN_2101"/>
<dbReference type="PATRIC" id="fig|652616.3.peg.2136"/>
<dbReference type="HOGENOM" id="CLU_025424_2_0_11"/>
<dbReference type="GO" id="GO:0005829">
    <property type="term" value="C:cytosol"/>
    <property type="evidence" value="ECO:0007669"/>
    <property type="project" value="TreeGrafter"/>
</dbReference>
<dbReference type="GO" id="GO:0004096">
    <property type="term" value="F:catalase activity"/>
    <property type="evidence" value="ECO:0007669"/>
    <property type="project" value="UniProtKB-UniRule"/>
</dbReference>
<dbReference type="GO" id="GO:0020037">
    <property type="term" value="F:heme binding"/>
    <property type="evidence" value="ECO:0007669"/>
    <property type="project" value="InterPro"/>
</dbReference>
<dbReference type="GO" id="GO:0046872">
    <property type="term" value="F:metal ion binding"/>
    <property type="evidence" value="ECO:0007669"/>
    <property type="project" value="UniProtKB-KW"/>
</dbReference>
<dbReference type="GO" id="GO:0070301">
    <property type="term" value="P:cellular response to hydrogen peroxide"/>
    <property type="evidence" value="ECO:0007669"/>
    <property type="project" value="TreeGrafter"/>
</dbReference>
<dbReference type="GO" id="GO:0042744">
    <property type="term" value="P:hydrogen peroxide catabolic process"/>
    <property type="evidence" value="ECO:0007669"/>
    <property type="project" value="UniProtKB-KW"/>
</dbReference>
<dbReference type="CDD" id="cd00649">
    <property type="entry name" value="catalase_peroxidase_1"/>
    <property type="match status" value="1"/>
</dbReference>
<dbReference type="CDD" id="cd08200">
    <property type="entry name" value="catalase_peroxidase_2"/>
    <property type="match status" value="1"/>
</dbReference>
<dbReference type="FunFam" id="1.10.420.10:FF:000002">
    <property type="entry name" value="Catalase-peroxidase"/>
    <property type="match status" value="1"/>
</dbReference>
<dbReference type="FunFam" id="1.10.420.10:FF:000004">
    <property type="entry name" value="Catalase-peroxidase"/>
    <property type="match status" value="1"/>
</dbReference>
<dbReference type="FunFam" id="1.10.520.10:FF:000002">
    <property type="entry name" value="Catalase-peroxidase"/>
    <property type="match status" value="1"/>
</dbReference>
<dbReference type="Gene3D" id="1.10.520.10">
    <property type="match status" value="2"/>
</dbReference>
<dbReference type="Gene3D" id="1.10.420.10">
    <property type="entry name" value="Peroxidase, domain 2"/>
    <property type="match status" value="2"/>
</dbReference>
<dbReference type="HAMAP" id="MF_01961">
    <property type="entry name" value="Catal_peroxid"/>
    <property type="match status" value="1"/>
</dbReference>
<dbReference type="InterPro" id="IPR000763">
    <property type="entry name" value="Catalase_peroxidase"/>
</dbReference>
<dbReference type="InterPro" id="IPR002016">
    <property type="entry name" value="Haem_peroxidase"/>
</dbReference>
<dbReference type="InterPro" id="IPR010255">
    <property type="entry name" value="Haem_peroxidase_sf"/>
</dbReference>
<dbReference type="InterPro" id="IPR019794">
    <property type="entry name" value="Peroxidases_AS"/>
</dbReference>
<dbReference type="InterPro" id="IPR019793">
    <property type="entry name" value="Peroxidases_heam-ligand_BS"/>
</dbReference>
<dbReference type="NCBIfam" id="TIGR00198">
    <property type="entry name" value="cat_per_HPI"/>
    <property type="match status" value="1"/>
</dbReference>
<dbReference type="NCBIfam" id="NF011635">
    <property type="entry name" value="PRK15061.1"/>
    <property type="match status" value="1"/>
</dbReference>
<dbReference type="PANTHER" id="PTHR30555:SF0">
    <property type="entry name" value="CATALASE-PEROXIDASE"/>
    <property type="match status" value="1"/>
</dbReference>
<dbReference type="PANTHER" id="PTHR30555">
    <property type="entry name" value="HYDROPEROXIDASE I, BIFUNCTIONAL CATALASE-PEROXIDASE"/>
    <property type="match status" value="1"/>
</dbReference>
<dbReference type="Pfam" id="PF00141">
    <property type="entry name" value="peroxidase"/>
    <property type="match status" value="2"/>
</dbReference>
<dbReference type="PRINTS" id="PR00460">
    <property type="entry name" value="BPEROXIDASE"/>
</dbReference>
<dbReference type="PRINTS" id="PR00458">
    <property type="entry name" value="PEROXIDASE"/>
</dbReference>
<dbReference type="SUPFAM" id="SSF48113">
    <property type="entry name" value="Heme-dependent peroxidases"/>
    <property type="match status" value="2"/>
</dbReference>
<dbReference type="PROSITE" id="PS00435">
    <property type="entry name" value="PEROXIDASE_1"/>
    <property type="match status" value="1"/>
</dbReference>
<dbReference type="PROSITE" id="PS00436">
    <property type="entry name" value="PEROXIDASE_2"/>
    <property type="match status" value="1"/>
</dbReference>
<dbReference type="PROSITE" id="PS50873">
    <property type="entry name" value="PEROXIDASE_4"/>
    <property type="match status" value="1"/>
</dbReference>
<gene>
    <name evidence="2" type="primary">katG</name>
    <name type="ordered locus">ERDMAN_2101</name>
</gene>
<name>KATG_MYCTE</name>
<organism>
    <name type="scientific">Mycobacterium tuberculosis (strain ATCC 35801 / TMC 107 / Erdman)</name>
    <dbReference type="NCBI Taxonomy" id="652616"/>
    <lineage>
        <taxon>Bacteria</taxon>
        <taxon>Bacillati</taxon>
        <taxon>Actinomycetota</taxon>
        <taxon>Actinomycetes</taxon>
        <taxon>Mycobacteriales</taxon>
        <taxon>Mycobacteriaceae</taxon>
        <taxon>Mycobacterium</taxon>
        <taxon>Mycobacterium tuberculosis complex</taxon>
    </lineage>
</organism>
<evidence type="ECO:0000250" key="1">
    <source>
        <dbReference type="UniProtKB" id="P9WIE5"/>
    </source>
</evidence>
<evidence type="ECO:0000255" key="2">
    <source>
        <dbReference type="HAMAP-Rule" id="MF_01961"/>
    </source>
</evidence>
<evidence type="ECO:0000269" key="3">
    <source>
    </source>
</evidence>
<evidence type="ECO:0000269" key="4">
    <source>
    </source>
</evidence>